<proteinExistence type="inferred from homology"/>
<sequence>MANITAAMVKELREKTGAGMMDCKGALNETQGDIEAAVDWLRKKGLAKAAKKAGRVAAEGLVAVESAGHHAAVVEVNSETDFVARNDAFQAFAREAAKIALNTDGTLEGLQTAHFPGATETVSEKLQALIATIGENMNLRRVTKLEVKKGVIASYVHNQISEGLGKIGVLVALESEGDVDALSALGRQIAMHIAATNPVALDASGVDAATVERESNILREKNAGKPDHVLAKIIESGLKSYYKEVTLLEQPFVHDGSKTVSQVLKEAGSKVGGPVTLTGFVRYALGDGIEKEEGPDFATEVAQQAGRA</sequence>
<accession>B1LTQ7</accession>
<name>EFTS_METRJ</name>
<dbReference type="EMBL" id="CP001001">
    <property type="protein sequence ID" value="ACB25426.1"/>
    <property type="molecule type" value="Genomic_DNA"/>
</dbReference>
<dbReference type="RefSeq" id="WP_012320389.1">
    <property type="nucleotide sequence ID" value="NC_010505.1"/>
</dbReference>
<dbReference type="SMR" id="B1LTQ7"/>
<dbReference type="STRING" id="426355.Mrad2831_3449"/>
<dbReference type="GeneID" id="6139497"/>
<dbReference type="KEGG" id="mrd:Mrad2831_3449"/>
<dbReference type="eggNOG" id="COG0264">
    <property type="taxonomic scope" value="Bacteria"/>
</dbReference>
<dbReference type="HOGENOM" id="CLU_047155_2_0_5"/>
<dbReference type="OrthoDB" id="9808348at2"/>
<dbReference type="Proteomes" id="UP000006589">
    <property type="component" value="Chromosome"/>
</dbReference>
<dbReference type="GO" id="GO:0005737">
    <property type="term" value="C:cytoplasm"/>
    <property type="evidence" value="ECO:0007669"/>
    <property type="project" value="UniProtKB-SubCell"/>
</dbReference>
<dbReference type="GO" id="GO:0003746">
    <property type="term" value="F:translation elongation factor activity"/>
    <property type="evidence" value="ECO:0007669"/>
    <property type="project" value="UniProtKB-UniRule"/>
</dbReference>
<dbReference type="CDD" id="cd14275">
    <property type="entry name" value="UBA_EF-Ts"/>
    <property type="match status" value="1"/>
</dbReference>
<dbReference type="FunFam" id="1.10.8.10:FF:000001">
    <property type="entry name" value="Elongation factor Ts"/>
    <property type="match status" value="1"/>
</dbReference>
<dbReference type="Gene3D" id="1.10.286.20">
    <property type="match status" value="1"/>
</dbReference>
<dbReference type="Gene3D" id="1.10.8.10">
    <property type="entry name" value="DNA helicase RuvA subunit, C-terminal domain"/>
    <property type="match status" value="1"/>
</dbReference>
<dbReference type="Gene3D" id="3.30.479.20">
    <property type="entry name" value="Elongation factor Ts, dimerisation domain"/>
    <property type="match status" value="2"/>
</dbReference>
<dbReference type="HAMAP" id="MF_00050">
    <property type="entry name" value="EF_Ts"/>
    <property type="match status" value="1"/>
</dbReference>
<dbReference type="InterPro" id="IPR036402">
    <property type="entry name" value="EF-Ts_dimer_sf"/>
</dbReference>
<dbReference type="InterPro" id="IPR001816">
    <property type="entry name" value="Transl_elong_EFTs/EF1B"/>
</dbReference>
<dbReference type="InterPro" id="IPR014039">
    <property type="entry name" value="Transl_elong_EFTs/EF1B_dimer"/>
</dbReference>
<dbReference type="InterPro" id="IPR018101">
    <property type="entry name" value="Transl_elong_Ts_CS"/>
</dbReference>
<dbReference type="InterPro" id="IPR009060">
    <property type="entry name" value="UBA-like_sf"/>
</dbReference>
<dbReference type="NCBIfam" id="TIGR00116">
    <property type="entry name" value="tsf"/>
    <property type="match status" value="1"/>
</dbReference>
<dbReference type="PANTHER" id="PTHR11741">
    <property type="entry name" value="ELONGATION FACTOR TS"/>
    <property type="match status" value="1"/>
</dbReference>
<dbReference type="PANTHER" id="PTHR11741:SF0">
    <property type="entry name" value="ELONGATION FACTOR TS, MITOCHONDRIAL"/>
    <property type="match status" value="1"/>
</dbReference>
<dbReference type="Pfam" id="PF00889">
    <property type="entry name" value="EF_TS"/>
    <property type="match status" value="1"/>
</dbReference>
<dbReference type="SUPFAM" id="SSF54713">
    <property type="entry name" value="Elongation factor Ts (EF-Ts), dimerisation domain"/>
    <property type="match status" value="2"/>
</dbReference>
<dbReference type="SUPFAM" id="SSF46934">
    <property type="entry name" value="UBA-like"/>
    <property type="match status" value="1"/>
</dbReference>
<dbReference type="PROSITE" id="PS01127">
    <property type="entry name" value="EF_TS_2"/>
    <property type="match status" value="1"/>
</dbReference>
<keyword id="KW-0963">Cytoplasm</keyword>
<keyword id="KW-0251">Elongation factor</keyword>
<keyword id="KW-0648">Protein biosynthesis</keyword>
<feature type="chain" id="PRO_1000116760" description="Elongation factor Ts">
    <location>
        <begin position="1"/>
        <end position="308"/>
    </location>
</feature>
<feature type="region of interest" description="Involved in Mg(2+) ion dislocation from EF-Tu" evidence="1">
    <location>
        <begin position="80"/>
        <end position="83"/>
    </location>
</feature>
<gene>
    <name evidence="1" type="primary">tsf</name>
    <name type="ordered locus">Mrad2831_3449</name>
</gene>
<organism>
    <name type="scientific">Methylobacterium radiotolerans (strain ATCC 27329 / DSM 1819 / JCM 2831 / NBRC 15690 / NCIMB 10815 / 0-1)</name>
    <dbReference type="NCBI Taxonomy" id="426355"/>
    <lineage>
        <taxon>Bacteria</taxon>
        <taxon>Pseudomonadati</taxon>
        <taxon>Pseudomonadota</taxon>
        <taxon>Alphaproteobacteria</taxon>
        <taxon>Hyphomicrobiales</taxon>
        <taxon>Methylobacteriaceae</taxon>
        <taxon>Methylobacterium</taxon>
    </lineage>
</organism>
<protein>
    <recommendedName>
        <fullName evidence="1">Elongation factor Ts</fullName>
        <shortName evidence="1">EF-Ts</shortName>
    </recommendedName>
</protein>
<reference key="1">
    <citation type="submission" date="2008-03" db="EMBL/GenBank/DDBJ databases">
        <title>Complete sequence of chromosome of Methylobacterium radiotolerans JCM 2831.</title>
        <authorList>
            <consortium name="US DOE Joint Genome Institute"/>
            <person name="Copeland A."/>
            <person name="Lucas S."/>
            <person name="Lapidus A."/>
            <person name="Glavina del Rio T."/>
            <person name="Dalin E."/>
            <person name="Tice H."/>
            <person name="Bruce D."/>
            <person name="Goodwin L."/>
            <person name="Pitluck S."/>
            <person name="Kiss H."/>
            <person name="Brettin T."/>
            <person name="Detter J.C."/>
            <person name="Han C."/>
            <person name="Kuske C.R."/>
            <person name="Schmutz J."/>
            <person name="Larimer F."/>
            <person name="Land M."/>
            <person name="Hauser L."/>
            <person name="Kyrpides N."/>
            <person name="Mikhailova N."/>
            <person name="Marx C.J."/>
            <person name="Richardson P."/>
        </authorList>
    </citation>
    <scope>NUCLEOTIDE SEQUENCE [LARGE SCALE GENOMIC DNA]</scope>
    <source>
        <strain>ATCC 27329 / DSM 1819 / JCM 2831 / NBRC 15690 / NCIMB 10815 / 0-1</strain>
    </source>
</reference>
<comment type="function">
    <text evidence="1">Associates with the EF-Tu.GDP complex and induces the exchange of GDP to GTP. It remains bound to the aminoacyl-tRNA.EF-Tu.GTP complex up to the GTP hydrolysis stage on the ribosome.</text>
</comment>
<comment type="subcellular location">
    <subcellularLocation>
        <location evidence="1">Cytoplasm</location>
    </subcellularLocation>
</comment>
<comment type="similarity">
    <text evidence="1">Belongs to the EF-Ts family.</text>
</comment>
<evidence type="ECO:0000255" key="1">
    <source>
        <dbReference type="HAMAP-Rule" id="MF_00050"/>
    </source>
</evidence>